<protein>
    <recommendedName>
        <fullName>NAD(P)H-quinone oxidoreductase subunit 6, chloroplastic</fullName>
        <ecNumber>7.1.1.-</ecNumber>
    </recommendedName>
    <alternativeName>
        <fullName>NAD(P)H dehydrogenase subunit 6</fullName>
    </alternativeName>
    <alternativeName>
        <fullName>NADH-plastoquinone oxidoreductase subunit 6</fullName>
    </alternativeName>
</protein>
<organism>
    <name type="scientific">Platanus occidentalis</name>
    <name type="common">Sycamore</name>
    <name type="synonym">American plane tree</name>
    <dbReference type="NCBI Taxonomy" id="4403"/>
    <lineage>
        <taxon>Eukaryota</taxon>
        <taxon>Viridiplantae</taxon>
        <taxon>Streptophyta</taxon>
        <taxon>Embryophyta</taxon>
        <taxon>Tracheophyta</taxon>
        <taxon>Spermatophyta</taxon>
        <taxon>Magnoliopsida</taxon>
        <taxon>Proteales</taxon>
        <taxon>Platanaceae</taxon>
        <taxon>Platanus</taxon>
    </lineage>
</organism>
<accession>Q09FZ3</accession>
<dbReference type="EC" id="7.1.1.-"/>
<dbReference type="EMBL" id="DQ923116">
    <property type="protein sequence ID" value="ABI49832.1"/>
    <property type="molecule type" value="Genomic_DNA"/>
</dbReference>
<dbReference type="RefSeq" id="YP_740618.1">
    <property type="nucleotide sequence ID" value="NC_008335.1"/>
</dbReference>
<dbReference type="SMR" id="Q09FZ3"/>
<dbReference type="GeneID" id="4271357"/>
<dbReference type="GO" id="GO:0009535">
    <property type="term" value="C:chloroplast thylakoid membrane"/>
    <property type="evidence" value="ECO:0007669"/>
    <property type="project" value="UniProtKB-SubCell"/>
</dbReference>
<dbReference type="GO" id="GO:0008137">
    <property type="term" value="F:NADH dehydrogenase (ubiquinone) activity"/>
    <property type="evidence" value="ECO:0007669"/>
    <property type="project" value="InterPro"/>
</dbReference>
<dbReference type="GO" id="GO:0048038">
    <property type="term" value="F:quinone binding"/>
    <property type="evidence" value="ECO:0007669"/>
    <property type="project" value="UniProtKB-KW"/>
</dbReference>
<dbReference type="FunFam" id="1.20.120.1200:FF:000002">
    <property type="entry name" value="NAD(P)H-quinone oxidoreductase subunit 6, chloroplastic"/>
    <property type="match status" value="1"/>
</dbReference>
<dbReference type="Gene3D" id="1.20.120.1200">
    <property type="entry name" value="NADH-ubiquinone/plastoquinone oxidoreductase chain 6, subunit NuoJ"/>
    <property type="match status" value="1"/>
</dbReference>
<dbReference type="InterPro" id="IPR050290">
    <property type="entry name" value="NAD(P)H-Q_Oxidoreduct_6"/>
</dbReference>
<dbReference type="InterPro" id="IPR001457">
    <property type="entry name" value="NADH_UbQ/plastoQ_OxRdtase_su6"/>
</dbReference>
<dbReference type="InterPro" id="IPR042106">
    <property type="entry name" value="Nuo/plastoQ_OxRdtase_6_NuoJ"/>
</dbReference>
<dbReference type="PANTHER" id="PTHR48479">
    <property type="entry name" value="NAD(P)H-QUINONE OXIDOREDUCTASE SUBUNIT 6, CHLOROPLASTIC"/>
    <property type="match status" value="1"/>
</dbReference>
<dbReference type="PANTHER" id="PTHR48479:SF1">
    <property type="entry name" value="NAD(P)H-QUINONE OXIDOREDUCTASE SUBUNIT 6, CHLOROPLASTIC"/>
    <property type="match status" value="1"/>
</dbReference>
<dbReference type="Pfam" id="PF00499">
    <property type="entry name" value="Oxidored_q3"/>
    <property type="match status" value="1"/>
</dbReference>
<name>NU6C_PLAOC</name>
<feature type="chain" id="PRO_0000360286" description="NAD(P)H-quinone oxidoreductase subunit 6, chloroplastic">
    <location>
        <begin position="1"/>
        <end position="176"/>
    </location>
</feature>
<feature type="transmembrane region" description="Helical" evidence="2">
    <location>
        <begin position="10"/>
        <end position="30"/>
    </location>
</feature>
<feature type="transmembrane region" description="Helical" evidence="2">
    <location>
        <begin position="32"/>
        <end position="52"/>
    </location>
</feature>
<feature type="transmembrane region" description="Helical" evidence="2">
    <location>
        <begin position="61"/>
        <end position="81"/>
    </location>
</feature>
<feature type="transmembrane region" description="Helical" evidence="2">
    <location>
        <begin position="92"/>
        <end position="112"/>
    </location>
</feature>
<feature type="transmembrane region" description="Helical" evidence="2">
    <location>
        <begin position="152"/>
        <end position="172"/>
    </location>
</feature>
<proteinExistence type="inferred from homology"/>
<reference key="1">
    <citation type="journal article" date="2006" name="BMC Plant Biol.">
        <title>Rapid and accurate pyrosequencing of angiosperm plastid genomes.</title>
        <authorList>
            <person name="Moore M.J."/>
            <person name="Dhingra A."/>
            <person name="Soltis P.S."/>
            <person name="Shaw R."/>
            <person name="Farmerie W.G."/>
            <person name="Folta K.M."/>
            <person name="Soltis D.E."/>
        </authorList>
    </citation>
    <scope>NUCLEOTIDE SEQUENCE [LARGE SCALE GENOMIC DNA]</scope>
</reference>
<comment type="function">
    <text evidence="1">NDH shuttles electrons from NAD(P)H:plastoquinone, via FMN and iron-sulfur (Fe-S) centers, to quinones in the photosynthetic chain and possibly in a chloroplast respiratory chain. The immediate electron acceptor for the enzyme in this species is believed to be plastoquinone. Couples the redox reaction to proton translocation, and thus conserves the redox energy in a proton gradient (By similarity).</text>
</comment>
<comment type="catalytic activity">
    <reaction>
        <text>a plastoquinone + NADH + (n+1) H(+)(in) = a plastoquinol + NAD(+) + n H(+)(out)</text>
        <dbReference type="Rhea" id="RHEA:42608"/>
        <dbReference type="Rhea" id="RHEA-COMP:9561"/>
        <dbReference type="Rhea" id="RHEA-COMP:9562"/>
        <dbReference type="ChEBI" id="CHEBI:15378"/>
        <dbReference type="ChEBI" id="CHEBI:17757"/>
        <dbReference type="ChEBI" id="CHEBI:57540"/>
        <dbReference type="ChEBI" id="CHEBI:57945"/>
        <dbReference type="ChEBI" id="CHEBI:62192"/>
    </reaction>
</comment>
<comment type="catalytic activity">
    <reaction>
        <text>a plastoquinone + NADPH + (n+1) H(+)(in) = a plastoquinol + NADP(+) + n H(+)(out)</text>
        <dbReference type="Rhea" id="RHEA:42612"/>
        <dbReference type="Rhea" id="RHEA-COMP:9561"/>
        <dbReference type="Rhea" id="RHEA-COMP:9562"/>
        <dbReference type="ChEBI" id="CHEBI:15378"/>
        <dbReference type="ChEBI" id="CHEBI:17757"/>
        <dbReference type="ChEBI" id="CHEBI:57783"/>
        <dbReference type="ChEBI" id="CHEBI:58349"/>
        <dbReference type="ChEBI" id="CHEBI:62192"/>
    </reaction>
</comment>
<comment type="subunit">
    <text evidence="1">NDH is composed of at least 16 different subunits, 5 of which are encoded in the nucleus.</text>
</comment>
<comment type="subcellular location">
    <subcellularLocation>
        <location evidence="1">Plastid</location>
        <location evidence="1">Chloroplast thylakoid membrane</location>
        <topology evidence="1">Multi-pass membrane protein</topology>
    </subcellularLocation>
</comment>
<comment type="similarity">
    <text evidence="3">Belongs to the complex I subunit 6 family.</text>
</comment>
<gene>
    <name type="primary">ndhG</name>
</gene>
<sequence>MDLPGPIHDFLLVFLGSGLILGGLGVVLLTNPIYSAFSLGLVLVCISLFYIPSNSHFVAAAQLLIYVGAINVLIIFAVMFMNGSEYYNDFHLWTVGDGVTSLLCTSIFVSLITTIPDTSWYGVIWTTRSNQIIEQDLISNGQQIGIHLSTDFFLPFELISIILLVALIGAIAMARQ</sequence>
<keyword id="KW-0150">Chloroplast</keyword>
<keyword id="KW-0472">Membrane</keyword>
<keyword id="KW-0520">NAD</keyword>
<keyword id="KW-0521">NADP</keyword>
<keyword id="KW-0934">Plastid</keyword>
<keyword id="KW-0618">Plastoquinone</keyword>
<keyword id="KW-0874">Quinone</keyword>
<keyword id="KW-0793">Thylakoid</keyword>
<keyword id="KW-1278">Translocase</keyword>
<keyword id="KW-0812">Transmembrane</keyword>
<keyword id="KW-1133">Transmembrane helix</keyword>
<keyword id="KW-0813">Transport</keyword>
<evidence type="ECO:0000250" key="1"/>
<evidence type="ECO:0000255" key="2"/>
<evidence type="ECO:0000305" key="3"/>
<geneLocation type="chloroplast"/>